<accession>Q21HI2</accession>
<reference key="1">
    <citation type="journal article" date="2008" name="PLoS Genet.">
        <title>Complete genome sequence of the complex carbohydrate-degrading marine bacterium, Saccharophagus degradans strain 2-40 T.</title>
        <authorList>
            <person name="Weiner R.M."/>
            <person name="Taylor L.E. II"/>
            <person name="Henrissat B."/>
            <person name="Hauser L."/>
            <person name="Land M."/>
            <person name="Coutinho P.M."/>
            <person name="Rancurel C."/>
            <person name="Saunders E.H."/>
            <person name="Longmire A.G."/>
            <person name="Zhang H."/>
            <person name="Bayer E.A."/>
            <person name="Gilbert H.J."/>
            <person name="Larimer F."/>
            <person name="Zhulin I.B."/>
            <person name="Ekborg N.A."/>
            <person name="Lamed R."/>
            <person name="Richardson P.M."/>
            <person name="Borovok I."/>
            <person name="Hutcheson S."/>
        </authorList>
    </citation>
    <scope>NUCLEOTIDE SEQUENCE [LARGE SCALE GENOMIC DNA]</scope>
    <source>
        <strain>2-40 / ATCC 43961 / DSM 17024</strain>
    </source>
</reference>
<protein>
    <recommendedName>
        <fullName evidence="1">UDP-3-O-acylglucosamine N-acyltransferase</fullName>
        <ecNumber evidence="1">2.3.1.191</ecNumber>
    </recommendedName>
</protein>
<gene>
    <name evidence="1" type="primary">lpxD</name>
    <name type="ordered locus">Sde_2587</name>
</gene>
<evidence type="ECO:0000255" key="1">
    <source>
        <dbReference type="HAMAP-Rule" id="MF_00523"/>
    </source>
</evidence>
<feature type="chain" id="PRO_0000264431" description="UDP-3-O-acylglucosamine N-acyltransferase">
    <location>
        <begin position="1"/>
        <end position="341"/>
    </location>
</feature>
<feature type="active site" description="Proton acceptor" evidence="1">
    <location>
        <position position="241"/>
    </location>
</feature>
<name>LPXD_SACD2</name>
<keyword id="KW-0012">Acyltransferase</keyword>
<keyword id="KW-0441">Lipid A biosynthesis</keyword>
<keyword id="KW-0444">Lipid biosynthesis</keyword>
<keyword id="KW-0443">Lipid metabolism</keyword>
<keyword id="KW-1185">Reference proteome</keyword>
<keyword id="KW-0677">Repeat</keyword>
<keyword id="KW-0808">Transferase</keyword>
<dbReference type="EC" id="2.3.1.191" evidence="1"/>
<dbReference type="EMBL" id="CP000282">
    <property type="protein sequence ID" value="ABD81847.1"/>
    <property type="molecule type" value="Genomic_DNA"/>
</dbReference>
<dbReference type="RefSeq" id="WP_011469064.1">
    <property type="nucleotide sequence ID" value="NC_007912.1"/>
</dbReference>
<dbReference type="SMR" id="Q21HI2"/>
<dbReference type="STRING" id="203122.Sde_2587"/>
<dbReference type="GeneID" id="98614250"/>
<dbReference type="KEGG" id="sde:Sde_2587"/>
<dbReference type="eggNOG" id="COG1044">
    <property type="taxonomic scope" value="Bacteria"/>
</dbReference>
<dbReference type="HOGENOM" id="CLU_049865_0_1_6"/>
<dbReference type="OrthoDB" id="9784739at2"/>
<dbReference type="UniPathway" id="UPA00973"/>
<dbReference type="Proteomes" id="UP000001947">
    <property type="component" value="Chromosome"/>
</dbReference>
<dbReference type="GO" id="GO:0016020">
    <property type="term" value="C:membrane"/>
    <property type="evidence" value="ECO:0007669"/>
    <property type="project" value="GOC"/>
</dbReference>
<dbReference type="GO" id="GO:0016410">
    <property type="term" value="F:N-acyltransferase activity"/>
    <property type="evidence" value="ECO:0007669"/>
    <property type="project" value="InterPro"/>
</dbReference>
<dbReference type="GO" id="GO:0009245">
    <property type="term" value="P:lipid A biosynthetic process"/>
    <property type="evidence" value="ECO:0007669"/>
    <property type="project" value="UniProtKB-UniRule"/>
</dbReference>
<dbReference type="CDD" id="cd03352">
    <property type="entry name" value="LbH_LpxD"/>
    <property type="match status" value="1"/>
</dbReference>
<dbReference type="Gene3D" id="1.20.5.170">
    <property type="match status" value="1"/>
</dbReference>
<dbReference type="Gene3D" id="2.160.10.10">
    <property type="entry name" value="Hexapeptide repeat proteins"/>
    <property type="match status" value="1"/>
</dbReference>
<dbReference type="Gene3D" id="3.40.1390.10">
    <property type="entry name" value="MurE/MurF, N-terminal domain"/>
    <property type="match status" value="1"/>
</dbReference>
<dbReference type="HAMAP" id="MF_00523">
    <property type="entry name" value="LpxD"/>
    <property type="match status" value="1"/>
</dbReference>
<dbReference type="InterPro" id="IPR001451">
    <property type="entry name" value="Hexapep"/>
</dbReference>
<dbReference type="InterPro" id="IPR018357">
    <property type="entry name" value="Hexapep_transf_CS"/>
</dbReference>
<dbReference type="InterPro" id="IPR007691">
    <property type="entry name" value="LpxD"/>
</dbReference>
<dbReference type="InterPro" id="IPR011004">
    <property type="entry name" value="Trimer_LpxA-like_sf"/>
</dbReference>
<dbReference type="InterPro" id="IPR020573">
    <property type="entry name" value="UDP_GlcNAc_AcTrfase_non-rep"/>
</dbReference>
<dbReference type="NCBIfam" id="TIGR01853">
    <property type="entry name" value="lipid_A_lpxD"/>
    <property type="match status" value="1"/>
</dbReference>
<dbReference type="NCBIfam" id="NF002060">
    <property type="entry name" value="PRK00892.1"/>
    <property type="match status" value="1"/>
</dbReference>
<dbReference type="PANTHER" id="PTHR43378">
    <property type="entry name" value="UDP-3-O-ACYLGLUCOSAMINE N-ACYLTRANSFERASE"/>
    <property type="match status" value="1"/>
</dbReference>
<dbReference type="PANTHER" id="PTHR43378:SF2">
    <property type="entry name" value="UDP-3-O-ACYLGLUCOSAMINE N-ACYLTRANSFERASE 1, MITOCHONDRIAL-RELATED"/>
    <property type="match status" value="1"/>
</dbReference>
<dbReference type="Pfam" id="PF00132">
    <property type="entry name" value="Hexapep"/>
    <property type="match status" value="3"/>
</dbReference>
<dbReference type="Pfam" id="PF04613">
    <property type="entry name" value="LpxD"/>
    <property type="match status" value="1"/>
</dbReference>
<dbReference type="SUPFAM" id="SSF51161">
    <property type="entry name" value="Trimeric LpxA-like enzymes"/>
    <property type="match status" value="1"/>
</dbReference>
<dbReference type="PROSITE" id="PS00101">
    <property type="entry name" value="HEXAPEP_TRANSFERASES"/>
    <property type="match status" value="1"/>
</dbReference>
<proteinExistence type="inferred from homology"/>
<organism>
    <name type="scientific">Saccharophagus degradans (strain 2-40 / ATCC 43961 / DSM 17024)</name>
    <dbReference type="NCBI Taxonomy" id="203122"/>
    <lineage>
        <taxon>Bacteria</taxon>
        <taxon>Pseudomonadati</taxon>
        <taxon>Pseudomonadota</taxon>
        <taxon>Gammaproteobacteria</taxon>
        <taxon>Cellvibrionales</taxon>
        <taxon>Cellvibrionaceae</taxon>
        <taxon>Saccharophagus</taxon>
    </lineage>
</organism>
<comment type="function">
    <text evidence="1">Catalyzes the N-acylation of UDP-3-O-acylglucosamine using 3-hydroxyacyl-ACP as the acyl donor. Is involved in the biosynthesis of lipid A, a phosphorylated glycolipid that anchors the lipopolysaccharide to the outer membrane of the cell.</text>
</comment>
<comment type="catalytic activity">
    <reaction evidence="1">
        <text>a UDP-3-O-[(3R)-3-hydroxyacyl]-alpha-D-glucosamine + a (3R)-hydroxyacyl-[ACP] = a UDP-2-N,3-O-bis[(3R)-3-hydroxyacyl]-alpha-D-glucosamine + holo-[ACP] + H(+)</text>
        <dbReference type="Rhea" id="RHEA:53836"/>
        <dbReference type="Rhea" id="RHEA-COMP:9685"/>
        <dbReference type="Rhea" id="RHEA-COMP:9945"/>
        <dbReference type="ChEBI" id="CHEBI:15378"/>
        <dbReference type="ChEBI" id="CHEBI:64479"/>
        <dbReference type="ChEBI" id="CHEBI:78827"/>
        <dbReference type="ChEBI" id="CHEBI:137740"/>
        <dbReference type="ChEBI" id="CHEBI:137748"/>
        <dbReference type="EC" id="2.3.1.191"/>
    </reaction>
</comment>
<comment type="pathway">
    <text evidence="1">Bacterial outer membrane biogenesis; LPS lipid A biosynthesis.</text>
</comment>
<comment type="subunit">
    <text evidence="1">Homotrimer.</text>
</comment>
<comment type="similarity">
    <text evidence="1">Belongs to the transferase hexapeptide repeat family. LpxD subfamily.</text>
</comment>
<sequence>MSNCKFTLAQLADHLDAQMVGDANYTVECIAPLESAGKNALSFLANSKYEKALATSQAGIMLLAQDSAEKFNGNKLIVKNPYLCYAKLSELFNFRLAKKQGVHPSATVDADATVAADAYIGPNCVIEAGAVIGGGTQLGAGCFVGADTKLGNNCLLHANVTLYAGVELGNKVLIHSGTVIGSDGFGFAPSAEGWVKIHQLGGVVIGNNVEIGSNTSIDRGALDDTIIEDGVIIDNLVHIAHNVKIGAGSAIAGCVGIAGSAVIGKNCTVAGMVAINGHITIADNTHFHGGTIVTKGVKESGAYASAPPMQEVSKWRRNAVRYGQLDEWVEKIKALQKAQKD</sequence>